<gene>
    <name evidence="1" type="primary">msrA</name>
    <name type="ordered locus">Amet_3697</name>
</gene>
<name>MSRA_ALKMQ</name>
<sequence>MKEIVLAGGCFWGVEAYMERIDGVVETKVGYANGHVENPSYEEVCSSQTGHAEVCYIKFDETKISLEILLNGFWKIIDPTVENRQGPDIGSQYRTGIYYGHEEDLDTIIKSKEMQQKKYDANIVTEIEPLKAFYDAEEYHQKYLKKNPGGYCHINLEI</sequence>
<reference key="1">
    <citation type="journal article" date="2016" name="Genome Announc.">
        <title>Complete genome sequence of Alkaliphilus metalliredigens strain QYMF, an alkaliphilic and metal-reducing bacterium isolated from borax-contaminated leachate ponds.</title>
        <authorList>
            <person name="Hwang C."/>
            <person name="Copeland A."/>
            <person name="Lucas S."/>
            <person name="Lapidus A."/>
            <person name="Barry K."/>
            <person name="Detter J.C."/>
            <person name="Glavina Del Rio T."/>
            <person name="Hammon N."/>
            <person name="Israni S."/>
            <person name="Dalin E."/>
            <person name="Tice H."/>
            <person name="Pitluck S."/>
            <person name="Chertkov O."/>
            <person name="Brettin T."/>
            <person name="Bruce D."/>
            <person name="Han C."/>
            <person name="Schmutz J."/>
            <person name="Larimer F."/>
            <person name="Land M.L."/>
            <person name="Hauser L."/>
            <person name="Kyrpides N."/>
            <person name="Mikhailova N."/>
            <person name="Ye Q."/>
            <person name="Zhou J."/>
            <person name="Richardson P."/>
            <person name="Fields M.W."/>
        </authorList>
    </citation>
    <scope>NUCLEOTIDE SEQUENCE [LARGE SCALE GENOMIC DNA]</scope>
    <source>
        <strain>QYMF</strain>
    </source>
</reference>
<protein>
    <recommendedName>
        <fullName evidence="1">Peptide methionine sulfoxide reductase MsrA</fullName>
        <shortName evidence="1">Protein-methionine-S-oxide reductase</shortName>
        <ecNumber evidence="1">1.8.4.11</ecNumber>
    </recommendedName>
    <alternativeName>
        <fullName evidence="1">Peptide-methionine (S)-S-oxide reductase</fullName>
        <shortName evidence="1">Peptide Met(O) reductase</shortName>
    </alternativeName>
</protein>
<evidence type="ECO:0000255" key="1">
    <source>
        <dbReference type="HAMAP-Rule" id="MF_01401"/>
    </source>
</evidence>
<comment type="function">
    <text evidence="1">Has an important function as a repair enzyme for proteins that have been inactivated by oxidation. Catalyzes the reversible oxidation-reduction of methionine sulfoxide in proteins to methionine.</text>
</comment>
<comment type="catalytic activity">
    <reaction evidence="1">
        <text>L-methionyl-[protein] + [thioredoxin]-disulfide + H2O = L-methionyl-(S)-S-oxide-[protein] + [thioredoxin]-dithiol</text>
        <dbReference type="Rhea" id="RHEA:14217"/>
        <dbReference type="Rhea" id="RHEA-COMP:10698"/>
        <dbReference type="Rhea" id="RHEA-COMP:10700"/>
        <dbReference type="Rhea" id="RHEA-COMP:12313"/>
        <dbReference type="Rhea" id="RHEA-COMP:12315"/>
        <dbReference type="ChEBI" id="CHEBI:15377"/>
        <dbReference type="ChEBI" id="CHEBI:16044"/>
        <dbReference type="ChEBI" id="CHEBI:29950"/>
        <dbReference type="ChEBI" id="CHEBI:44120"/>
        <dbReference type="ChEBI" id="CHEBI:50058"/>
        <dbReference type="EC" id="1.8.4.11"/>
    </reaction>
</comment>
<comment type="catalytic activity">
    <reaction evidence="1">
        <text>[thioredoxin]-disulfide + L-methionine + H2O = L-methionine (S)-S-oxide + [thioredoxin]-dithiol</text>
        <dbReference type="Rhea" id="RHEA:19993"/>
        <dbReference type="Rhea" id="RHEA-COMP:10698"/>
        <dbReference type="Rhea" id="RHEA-COMP:10700"/>
        <dbReference type="ChEBI" id="CHEBI:15377"/>
        <dbReference type="ChEBI" id="CHEBI:29950"/>
        <dbReference type="ChEBI" id="CHEBI:50058"/>
        <dbReference type="ChEBI" id="CHEBI:57844"/>
        <dbReference type="ChEBI" id="CHEBI:58772"/>
        <dbReference type="EC" id="1.8.4.11"/>
    </reaction>
</comment>
<comment type="similarity">
    <text evidence="1">Belongs to the MsrA Met sulfoxide reductase family.</text>
</comment>
<dbReference type="EC" id="1.8.4.11" evidence="1"/>
<dbReference type="EMBL" id="CP000724">
    <property type="protein sequence ID" value="ABR49817.1"/>
    <property type="molecule type" value="Genomic_DNA"/>
</dbReference>
<dbReference type="RefSeq" id="WP_012064777.1">
    <property type="nucleotide sequence ID" value="NC_009633.1"/>
</dbReference>
<dbReference type="SMR" id="A6TUE9"/>
<dbReference type="STRING" id="293826.Amet_3697"/>
<dbReference type="KEGG" id="amt:Amet_3697"/>
<dbReference type="eggNOG" id="COG0225">
    <property type="taxonomic scope" value="Bacteria"/>
</dbReference>
<dbReference type="HOGENOM" id="CLU_031040_10_2_9"/>
<dbReference type="OrthoDB" id="4174719at2"/>
<dbReference type="Proteomes" id="UP000001572">
    <property type="component" value="Chromosome"/>
</dbReference>
<dbReference type="GO" id="GO:0005737">
    <property type="term" value="C:cytoplasm"/>
    <property type="evidence" value="ECO:0007669"/>
    <property type="project" value="TreeGrafter"/>
</dbReference>
<dbReference type="GO" id="GO:0036456">
    <property type="term" value="F:L-methionine-(S)-S-oxide reductase activity"/>
    <property type="evidence" value="ECO:0007669"/>
    <property type="project" value="TreeGrafter"/>
</dbReference>
<dbReference type="GO" id="GO:0008113">
    <property type="term" value="F:peptide-methionine (S)-S-oxide reductase activity"/>
    <property type="evidence" value="ECO:0007669"/>
    <property type="project" value="UniProtKB-UniRule"/>
</dbReference>
<dbReference type="GO" id="GO:0034599">
    <property type="term" value="P:cellular response to oxidative stress"/>
    <property type="evidence" value="ECO:0007669"/>
    <property type="project" value="TreeGrafter"/>
</dbReference>
<dbReference type="GO" id="GO:0036211">
    <property type="term" value="P:protein modification process"/>
    <property type="evidence" value="ECO:0007669"/>
    <property type="project" value="UniProtKB-UniRule"/>
</dbReference>
<dbReference type="Gene3D" id="3.30.1060.10">
    <property type="entry name" value="Peptide methionine sulphoxide reductase MsrA"/>
    <property type="match status" value="1"/>
</dbReference>
<dbReference type="HAMAP" id="MF_01401">
    <property type="entry name" value="MsrA"/>
    <property type="match status" value="1"/>
</dbReference>
<dbReference type="InterPro" id="IPR002569">
    <property type="entry name" value="Met_Sox_Rdtase_MsrA_dom"/>
</dbReference>
<dbReference type="InterPro" id="IPR036509">
    <property type="entry name" value="Met_Sox_Rdtase_MsrA_sf"/>
</dbReference>
<dbReference type="InterPro" id="IPR050162">
    <property type="entry name" value="MsrA_MetSO_reductase"/>
</dbReference>
<dbReference type="NCBIfam" id="TIGR00401">
    <property type="entry name" value="msrA"/>
    <property type="match status" value="1"/>
</dbReference>
<dbReference type="PANTHER" id="PTHR42799">
    <property type="entry name" value="MITOCHONDRIAL PEPTIDE METHIONINE SULFOXIDE REDUCTASE"/>
    <property type="match status" value="1"/>
</dbReference>
<dbReference type="PANTHER" id="PTHR42799:SF2">
    <property type="entry name" value="MITOCHONDRIAL PEPTIDE METHIONINE SULFOXIDE REDUCTASE"/>
    <property type="match status" value="1"/>
</dbReference>
<dbReference type="Pfam" id="PF01625">
    <property type="entry name" value="PMSR"/>
    <property type="match status" value="1"/>
</dbReference>
<dbReference type="SUPFAM" id="SSF55068">
    <property type="entry name" value="Peptide methionine sulfoxide reductase"/>
    <property type="match status" value="1"/>
</dbReference>
<organism>
    <name type="scientific">Alkaliphilus metalliredigens (strain QYMF)</name>
    <dbReference type="NCBI Taxonomy" id="293826"/>
    <lineage>
        <taxon>Bacteria</taxon>
        <taxon>Bacillati</taxon>
        <taxon>Bacillota</taxon>
        <taxon>Clostridia</taxon>
        <taxon>Peptostreptococcales</taxon>
        <taxon>Natronincolaceae</taxon>
        <taxon>Alkaliphilus</taxon>
    </lineage>
</organism>
<proteinExistence type="inferred from homology"/>
<feature type="chain" id="PRO_1000068306" description="Peptide methionine sulfoxide reductase MsrA">
    <location>
        <begin position="1"/>
        <end position="158"/>
    </location>
</feature>
<feature type="active site" evidence="1">
    <location>
        <position position="10"/>
    </location>
</feature>
<keyword id="KW-0560">Oxidoreductase</keyword>
<keyword id="KW-1185">Reference proteome</keyword>
<accession>A6TUE9</accession>